<comment type="function">
    <text evidence="1">Involved in the biosynthesis of isopentenyl diphosphate (IPP) and dimethylallyl diphosphate (DMAPP), two major building blocks of isoprenoid compounds. Catalyzes the conversion of 4-diphosphocytidyl-2-C-methyl-D-erythritol 2-phosphate (CDP-ME2P) to 2-C-methyl-D-erythritol 2,4-cyclodiphosphate (ME-CPP) with a corresponding release of cytidine 5-monophosphate (CMP).</text>
</comment>
<comment type="catalytic activity">
    <reaction evidence="1">
        <text>4-CDP-2-C-methyl-D-erythritol 2-phosphate = 2-C-methyl-D-erythritol 2,4-cyclic diphosphate + CMP</text>
        <dbReference type="Rhea" id="RHEA:23864"/>
        <dbReference type="ChEBI" id="CHEBI:57919"/>
        <dbReference type="ChEBI" id="CHEBI:58483"/>
        <dbReference type="ChEBI" id="CHEBI:60377"/>
        <dbReference type="EC" id="4.6.1.12"/>
    </reaction>
</comment>
<comment type="cofactor">
    <cofactor evidence="1">
        <name>a divalent metal cation</name>
        <dbReference type="ChEBI" id="CHEBI:60240"/>
    </cofactor>
    <text evidence="1">Binds 1 divalent metal cation per subunit.</text>
</comment>
<comment type="pathway">
    <text evidence="1">Isoprenoid biosynthesis; isopentenyl diphosphate biosynthesis via DXP pathway; isopentenyl diphosphate from 1-deoxy-D-xylulose 5-phosphate: step 4/6.</text>
</comment>
<comment type="subunit">
    <text evidence="1">Homotrimer.</text>
</comment>
<comment type="similarity">
    <text evidence="1">Belongs to the IspF family.</text>
</comment>
<organism>
    <name type="scientific">Yersinia pestis bv. Antiqua (strain Nepal516)</name>
    <dbReference type="NCBI Taxonomy" id="377628"/>
    <lineage>
        <taxon>Bacteria</taxon>
        <taxon>Pseudomonadati</taxon>
        <taxon>Pseudomonadota</taxon>
        <taxon>Gammaproteobacteria</taxon>
        <taxon>Enterobacterales</taxon>
        <taxon>Yersiniaceae</taxon>
        <taxon>Yersinia</taxon>
    </lineage>
</organism>
<name>ISPF_YERPN</name>
<accession>Q1CLR5</accession>
<accession>C4GPS3</accession>
<protein>
    <recommendedName>
        <fullName evidence="1">2-C-methyl-D-erythritol 2,4-cyclodiphosphate synthase</fullName>
        <shortName evidence="1">MECDP-synthase</shortName>
        <shortName evidence="1">MECPP-synthase</shortName>
        <shortName evidence="1">MECPS</shortName>
        <ecNumber evidence="1">4.6.1.12</ecNumber>
    </recommendedName>
</protein>
<reference key="1">
    <citation type="journal article" date="2006" name="J. Bacteriol.">
        <title>Complete genome sequence of Yersinia pestis strains Antiqua and Nepal516: evidence of gene reduction in an emerging pathogen.</title>
        <authorList>
            <person name="Chain P.S.G."/>
            <person name="Hu P."/>
            <person name="Malfatti S.A."/>
            <person name="Radnedge L."/>
            <person name="Larimer F."/>
            <person name="Vergez L.M."/>
            <person name="Worsham P."/>
            <person name="Chu M.C."/>
            <person name="Andersen G.L."/>
        </authorList>
    </citation>
    <scope>NUCLEOTIDE SEQUENCE [LARGE SCALE GENOMIC DNA]</scope>
    <source>
        <strain>Nepal516</strain>
    </source>
</reference>
<reference key="2">
    <citation type="submission" date="2009-04" db="EMBL/GenBank/DDBJ databases">
        <title>Yersinia pestis Nepal516A whole genome shotgun sequencing project.</title>
        <authorList>
            <person name="Plunkett G. III"/>
            <person name="Anderson B.D."/>
            <person name="Baumler D.J."/>
            <person name="Burland V."/>
            <person name="Cabot E.L."/>
            <person name="Glasner J.D."/>
            <person name="Mau B."/>
            <person name="Neeno-Eckwall E."/>
            <person name="Perna N.T."/>
            <person name="Munk A.C."/>
            <person name="Tapia R."/>
            <person name="Green L.D."/>
            <person name="Rogers Y.C."/>
            <person name="Detter J.C."/>
            <person name="Bruce D.C."/>
            <person name="Brettin T.S."/>
        </authorList>
    </citation>
    <scope>NUCLEOTIDE SEQUENCE [LARGE SCALE GENOMIC DNA]</scope>
    <source>
        <strain>Nepal516</strain>
    </source>
</reference>
<evidence type="ECO:0000255" key="1">
    <source>
        <dbReference type="HAMAP-Rule" id="MF_00107"/>
    </source>
</evidence>
<gene>
    <name evidence="1" type="primary">ispF</name>
    <name type="ordered locus">YPN_0733</name>
    <name type="ORF">YP516_0781</name>
</gene>
<keyword id="KW-0414">Isoprene biosynthesis</keyword>
<keyword id="KW-0456">Lyase</keyword>
<keyword id="KW-0479">Metal-binding</keyword>
<dbReference type="EC" id="4.6.1.12" evidence="1"/>
<dbReference type="EMBL" id="CP000305">
    <property type="protein sequence ID" value="ABG17065.1"/>
    <property type="molecule type" value="Genomic_DNA"/>
</dbReference>
<dbReference type="EMBL" id="ACNQ01000007">
    <property type="protein sequence ID" value="EEO77929.1"/>
    <property type="molecule type" value="Genomic_DNA"/>
</dbReference>
<dbReference type="RefSeq" id="WP_002209392.1">
    <property type="nucleotide sequence ID" value="NZ_ACNQ01000007.1"/>
</dbReference>
<dbReference type="SMR" id="Q1CLR5"/>
<dbReference type="GeneID" id="96664269"/>
<dbReference type="KEGG" id="ypn:YPN_0733"/>
<dbReference type="HOGENOM" id="CLU_084630_2_0_6"/>
<dbReference type="UniPathway" id="UPA00056">
    <property type="reaction ID" value="UER00095"/>
</dbReference>
<dbReference type="Proteomes" id="UP000008936">
    <property type="component" value="Chromosome"/>
</dbReference>
<dbReference type="GO" id="GO:0008685">
    <property type="term" value="F:2-C-methyl-D-erythritol 2,4-cyclodiphosphate synthase activity"/>
    <property type="evidence" value="ECO:0007669"/>
    <property type="project" value="UniProtKB-UniRule"/>
</dbReference>
<dbReference type="GO" id="GO:0046872">
    <property type="term" value="F:metal ion binding"/>
    <property type="evidence" value="ECO:0007669"/>
    <property type="project" value="UniProtKB-KW"/>
</dbReference>
<dbReference type="GO" id="GO:0019288">
    <property type="term" value="P:isopentenyl diphosphate biosynthetic process, methylerythritol 4-phosphate pathway"/>
    <property type="evidence" value="ECO:0007669"/>
    <property type="project" value="UniProtKB-UniRule"/>
</dbReference>
<dbReference type="GO" id="GO:0016114">
    <property type="term" value="P:terpenoid biosynthetic process"/>
    <property type="evidence" value="ECO:0007669"/>
    <property type="project" value="InterPro"/>
</dbReference>
<dbReference type="CDD" id="cd00554">
    <property type="entry name" value="MECDP_synthase"/>
    <property type="match status" value="1"/>
</dbReference>
<dbReference type="FunFam" id="3.30.1330.50:FF:000001">
    <property type="entry name" value="2-C-methyl-D-erythritol 2,4-cyclodiphosphate synthase"/>
    <property type="match status" value="1"/>
</dbReference>
<dbReference type="Gene3D" id="3.30.1330.50">
    <property type="entry name" value="2-C-methyl-D-erythritol 2,4-cyclodiphosphate synthase"/>
    <property type="match status" value="1"/>
</dbReference>
<dbReference type="HAMAP" id="MF_00107">
    <property type="entry name" value="IspF"/>
    <property type="match status" value="1"/>
</dbReference>
<dbReference type="InterPro" id="IPR003526">
    <property type="entry name" value="MECDP_synthase"/>
</dbReference>
<dbReference type="InterPro" id="IPR020555">
    <property type="entry name" value="MECDP_synthase_CS"/>
</dbReference>
<dbReference type="InterPro" id="IPR036571">
    <property type="entry name" value="MECDP_synthase_sf"/>
</dbReference>
<dbReference type="NCBIfam" id="TIGR00151">
    <property type="entry name" value="ispF"/>
    <property type="match status" value="1"/>
</dbReference>
<dbReference type="PANTHER" id="PTHR43181">
    <property type="entry name" value="2-C-METHYL-D-ERYTHRITOL 2,4-CYCLODIPHOSPHATE SYNTHASE, CHLOROPLASTIC"/>
    <property type="match status" value="1"/>
</dbReference>
<dbReference type="PANTHER" id="PTHR43181:SF1">
    <property type="entry name" value="2-C-METHYL-D-ERYTHRITOL 2,4-CYCLODIPHOSPHATE SYNTHASE, CHLOROPLASTIC"/>
    <property type="match status" value="1"/>
</dbReference>
<dbReference type="Pfam" id="PF02542">
    <property type="entry name" value="YgbB"/>
    <property type="match status" value="1"/>
</dbReference>
<dbReference type="SUPFAM" id="SSF69765">
    <property type="entry name" value="IpsF-like"/>
    <property type="match status" value="1"/>
</dbReference>
<dbReference type="PROSITE" id="PS01350">
    <property type="entry name" value="ISPF"/>
    <property type="match status" value="1"/>
</dbReference>
<feature type="chain" id="PRO_1000022894" description="2-C-methyl-D-erythritol 2,4-cyclodiphosphate synthase">
    <location>
        <begin position="1"/>
        <end position="162"/>
    </location>
</feature>
<feature type="binding site" evidence="1">
    <location>
        <begin position="8"/>
        <end position="10"/>
    </location>
    <ligand>
        <name>4-CDP-2-C-methyl-D-erythritol 2-phosphate</name>
        <dbReference type="ChEBI" id="CHEBI:57919"/>
    </ligand>
</feature>
<feature type="binding site" evidence="1">
    <location>
        <position position="8"/>
    </location>
    <ligand>
        <name>a divalent metal cation</name>
        <dbReference type="ChEBI" id="CHEBI:60240"/>
    </ligand>
</feature>
<feature type="binding site" evidence="1">
    <location>
        <position position="10"/>
    </location>
    <ligand>
        <name>a divalent metal cation</name>
        <dbReference type="ChEBI" id="CHEBI:60240"/>
    </ligand>
</feature>
<feature type="binding site" evidence="1">
    <location>
        <begin position="36"/>
        <end position="37"/>
    </location>
    <ligand>
        <name>4-CDP-2-C-methyl-D-erythritol 2-phosphate</name>
        <dbReference type="ChEBI" id="CHEBI:57919"/>
    </ligand>
</feature>
<feature type="binding site" evidence="1">
    <location>
        <position position="44"/>
    </location>
    <ligand>
        <name>a divalent metal cation</name>
        <dbReference type="ChEBI" id="CHEBI:60240"/>
    </ligand>
</feature>
<feature type="binding site" evidence="1">
    <location>
        <begin position="58"/>
        <end position="60"/>
    </location>
    <ligand>
        <name>4-CDP-2-C-methyl-D-erythritol 2-phosphate</name>
        <dbReference type="ChEBI" id="CHEBI:57919"/>
    </ligand>
</feature>
<feature type="binding site" evidence="1">
    <location>
        <begin position="63"/>
        <end position="67"/>
    </location>
    <ligand>
        <name>4-CDP-2-C-methyl-D-erythritol 2-phosphate</name>
        <dbReference type="ChEBI" id="CHEBI:57919"/>
    </ligand>
</feature>
<feature type="binding site" evidence="1">
    <location>
        <begin position="102"/>
        <end position="108"/>
    </location>
    <ligand>
        <name>4-CDP-2-C-methyl-D-erythritol 2-phosphate</name>
        <dbReference type="ChEBI" id="CHEBI:57919"/>
    </ligand>
</feature>
<feature type="binding site" evidence="1">
    <location>
        <begin position="134"/>
        <end position="137"/>
    </location>
    <ligand>
        <name>4-CDP-2-C-methyl-D-erythritol 2-phosphate</name>
        <dbReference type="ChEBI" id="CHEBI:57919"/>
    </ligand>
</feature>
<feature type="binding site" evidence="1">
    <location>
        <position position="141"/>
    </location>
    <ligand>
        <name>4-CDP-2-C-methyl-D-erythritol 2-phosphate</name>
        <dbReference type="ChEBI" id="CHEBI:57919"/>
    </ligand>
</feature>
<feature type="binding site" evidence="1">
    <location>
        <position position="144"/>
    </location>
    <ligand>
        <name>4-CDP-2-C-methyl-D-erythritol 2-phosphate</name>
        <dbReference type="ChEBI" id="CHEBI:57919"/>
    </ligand>
</feature>
<feature type="site" description="Transition state stabilizer" evidence="1">
    <location>
        <position position="36"/>
    </location>
</feature>
<feature type="site" description="Transition state stabilizer" evidence="1">
    <location>
        <position position="135"/>
    </location>
</feature>
<sequence length="162" mass="17182">MRIGHGFDVHKFGENGSGPLIIGGVRIPYEKGLLAHSDGDVALHAATDALLGAAALGDIGKLFPDTDPAFKGADSRGLLREAYRRILAKGYKLGNLDITIIAQAPKMAPHIPQMRVNLAEDLQCHMDDINVKATTTEQLGFTGRGEGIACEAVVLLVNVEQG</sequence>
<proteinExistence type="inferred from homology"/>